<dbReference type="EMBL" id="AL939109">
    <property type="protein sequence ID" value="CAB70923.1"/>
    <property type="molecule type" value="Genomic_DNA"/>
</dbReference>
<dbReference type="RefSeq" id="NP_625800.1">
    <property type="nucleotide sequence ID" value="NC_003888.3"/>
</dbReference>
<dbReference type="RefSeq" id="WP_003977306.1">
    <property type="nucleotide sequence ID" value="NZ_VNID01000021.1"/>
</dbReference>
<dbReference type="SMR" id="Q9L288"/>
<dbReference type="FunCoup" id="Q9L288">
    <property type="interactions" value="311"/>
</dbReference>
<dbReference type="STRING" id="100226.gene:17759107"/>
<dbReference type="PaxDb" id="100226-SCO1521"/>
<dbReference type="KEGG" id="sco:SCO1521"/>
<dbReference type="PATRIC" id="fig|100226.15.peg.1530"/>
<dbReference type="eggNOG" id="COG0217">
    <property type="taxonomic scope" value="Bacteria"/>
</dbReference>
<dbReference type="HOGENOM" id="CLU_062974_2_2_11"/>
<dbReference type="InParanoid" id="Q9L288"/>
<dbReference type="OrthoDB" id="9781053at2"/>
<dbReference type="PhylomeDB" id="Q9L288"/>
<dbReference type="Proteomes" id="UP000001973">
    <property type="component" value="Chromosome"/>
</dbReference>
<dbReference type="GO" id="GO:0005829">
    <property type="term" value="C:cytosol"/>
    <property type="evidence" value="ECO:0000318"/>
    <property type="project" value="GO_Central"/>
</dbReference>
<dbReference type="GO" id="GO:0003677">
    <property type="term" value="F:DNA binding"/>
    <property type="evidence" value="ECO:0007669"/>
    <property type="project" value="UniProtKB-UniRule"/>
</dbReference>
<dbReference type="GO" id="GO:0006355">
    <property type="term" value="P:regulation of DNA-templated transcription"/>
    <property type="evidence" value="ECO:0007669"/>
    <property type="project" value="UniProtKB-UniRule"/>
</dbReference>
<dbReference type="FunFam" id="1.10.10.200:FF:000002">
    <property type="entry name" value="Probable transcriptional regulatory protein CLM62_37755"/>
    <property type="match status" value="1"/>
</dbReference>
<dbReference type="FunFam" id="3.30.70.980:FF:000006">
    <property type="entry name" value="Probable transcriptional regulatory protein J113_18170"/>
    <property type="match status" value="1"/>
</dbReference>
<dbReference type="Gene3D" id="1.10.10.200">
    <property type="match status" value="1"/>
</dbReference>
<dbReference type="Gene3D" id="3.30.70.980">
    <property type="match status" value="2"/>
</dbReference>
<dbReference type="HAMAP" id="MF_00693">
    <property type="entry name" value="Transcrip_reg_TACO1"/>
    <property type="match status" value="1"/>
</dbReference>
<dbReference type="InterPro" id="IPR017856">
    <property type="entry name" value="Integrase-like_N"/>
</dbReference>
<dbReference type="InterPro" id="IPR048300">
    <property type="entry name" value="TACO1_YebC-like_2nd/3rd_dom"/>
</dbReference>
<dbReference type="InterPro" id="IPR049083">
    <property type="entry name" value="TACO1_YebC_N"/>
</dbReference>
<dbReference type="InterPro" id="IPR002876">
    <property type="entry name" value="Transcrip_reg_TACO1-like"/>
</dbReference>
<dbReference type="InterPro" id="IPR026564">
    <property type="entry name" value="Transcrip_reg_TACO1-like_dom3"/>
</dbReference>
<dbReference type="InterPro" id="IPR029072">
    <property type="entry name" value="YebC-like"/>
</dbReference>
<dbReference type="NCBIfam" id="NF001030">
    <property type="entry name" value="PRK00110.1"/>
    <property type="match status" value="1"/>
</dbReference>
<dbReference type="NCBIfam" id="NF009044">
    <property type="entry name" value="PRK12378.1"/>
    <property type="match status" value="1"/>
</dbReference>
<dbReference type="NCBIfam" id="TIGR01033">
    <property type="entry name" value="YebC/PmpR family DNA-binding transcriptional regulator"/>
    <property type="match status" value="1"/>
</dbReference>
<dbReference type="PANTHER" id="PTHR12532:SF6">
    <property type="entry name" value="TRANSCRIPTIONAL REGULATORY PROTEIN YEBC-RELATED"/>
    <property type="match status" value="1"/>
</dbReference>
<dbReference type="PANTHER" id="PTHR12532">
    <property type="entry name" value="TRANSLATIONAL ACTIVATOR OF CYTOCHROME C OXIDASE 1"/>
    <property type="match status" value="1"/>
</dbReference>
<dbReference type="Pfam" id="PF20772">
    <property type="entry name" value="TACO1_YebC_N"/>
    <property type="match status" value="1"/>
</dbReference>
<dbReference type="Pfam" id="PF01709">
    <property type="entry name" value="Transcrip_reg"/>
    <property type="match status" value="1"/>
</dbReference>
<dbReference type="SUPFAM" id="SSF75625">
    <property type="entry name" value="YebC-like"/>
    <property type="match status" value="1"/>
</dbReference>
<feature type="chain" id="PRO_0000175902" description="Probable transcriptional regulatory protein SCO1521">
    <location>
        <begin position="1"/>
        <end position="250"/>
    </location>
</feature>
<comment type="subcellular location">
    <subcellularLocation>
        <location evidence="1">Cytoplasm</location>
    </subcellularLocation>
</comment>
<comment type="similarity">
    <text evidence="1">Belongs to the TACO1 family.</text>
</comment>
<gene>
    <name type="ordered locus">SCO1521</name>
    <name type="ORF">SCL2.11c</name>
</gene>
<organism>
    <name type="scientific">Streptomyces coelicolor (strain ATCC BAA-471 / A3(2) / M145)</name>
    <dbReference type="NCBI Taxonomy" id="100226"/>
    <lineage>
        <taxon>Bacteria</taxon>
        <taxon>Bacillati</taxon>
        <taxon>Actinomycetota</taxon>
        <taxon>Actinomycetes</taxon>
        <taxon>Kitasatosporales</taxon>
        <taxon>Streptomycetaceae</taxon>
        <taxon>Streptomyces</taxon>
        <taxon>Streptomyces albidoflavus group</taxon>
    </lineage>
</organism>
<proteinExistence type="inferred from homology"/>
<accession>Q9L288</accession>
<evidence type="ECO:0000255" key="1">
    <source>
        <dbReference type="HAMAP-Rule" id="MF_00693"/>
    </source>
</evidence>
<name>Y1521_STRCO</name>
<sequence length="250" mass="26831">MSGHSKWATTKHKKAVIDAKRGKLFAKLIKNIEVAARMGGVDIEGNPTLYDAIQKAKKQSVPNKNIDSAVKRGGGLEAGGADYETIMYEGYGPNGVAVLIECLTDNRNRAASDVRVAMTRNGGSMADPGSVSYLFNRKGVVIVPKGELAEDDVLGAVLDAGAEEVNDLGESFEVLSEATDLVAVRTALQEAGIDYESADANFVPTMQVELDEEGARKIFRLIDALEDSDDVQNVFANFDVSDEIMEKVDA</sequence>
<reference key="1">
    <citation type="journal article" date="2002" name="Nature">
        <title>Complete genome sequence of the model actinomycete Streptomyces coelicolor A3(2).</title>
        <authorList>
            <person name="Bentley S.D."/>
            <person name="Chater K.F."/>
            <person name="Cerdeno-Tarraga A.-M."/>
            <person name="Challis G.L."/>
            <person name="Thomson N.R."/>
            <person name="James K.D."/>
            <person name="Harris D.E."/>
            <person name="Quail M.A."/>
            <person name="Kieser H."/>
            <person name="Harper D."/>
            <person name="Bateman A."/>
            <person name="Brown S."/>
            <person name="Chandra G."/>
            <person name="Chen C.W."/>
            <person name="Collins M."/>
            <person name="Cronin A."/>
            <person name="Fraser A."/>
            <person name="Goble A."/>
            <person name="Hidalgo J."/>
            <person name="Hornsby T."/>
            <person name="Howarth S."/>
            <person name="Huang C.-H."/>
            <person name="Kieser T."/>
            <person name="Larke L."/>
            <person name="Murphy L.D."/>
            <person name="Oliver K."/>
            <person name="O'Neil S."/>
            <person name="Rabbinowitsch E."/>
            <person name="Rajandream M.A."/>
            <person name="Rutherford K.M."/>
            <person name="Rutter S."/>
            <person name="Seeger K."/>
            <person name="Saunders D."/>
            <person name="Sharp S."/>
            <person name="Squares R."/>
            <person name="Squares S."/>
            <person name="Taylor K."/>
            <person name="Warren T."/>
            <person name="Wietzorrek A."/>
            <person name="Woodward J.R."/>
            <person name="Barrell B.G."/>
            <person name="Parkhill J."/>
            <person name="Hopwood D.A."/>
        </authorList>
    </citation>
    <scope>NUCLEOTIDE SEQUENCE [LARGE SCALE GENOMIC DNA]</scope>
    <source>
        <strain>ATCC BAA-471 / A3(2) / M145</strain>
    </source>
</reference>
<protein>
    <recommendedName>
        <fullName evidence="1">Probable transcriptional regulatory protein SCO1521</fullName>
    </recommendedName>
</protein>
<keyword id="KW-0963">Cytoplasm</keyword>
<keyword id="KW-0238">DNA-binding</keyword>
<keyword id="KW-1185">Reference proteome</keyword>
<keyword id="KW-0804">Transcription</keyword>
<keyword id="KW-0805">Transcription regulation</keyword>